<proteinExistence type="inferred from homology"/>
<keyword id="KW-0175">Coiled coil</keyword>
<keyword id="KW-1185">Reference proteome</keyword>
<organism>
    <name type="scientific">Invertebrate iridescent virus 6</name>
    <name type="common">IIV-6</name>
    <name type="synonym">Chilo iridescent virus</name>
    <dbReference type="NCBI Taxonomy" id="176652"/>
    <lineage>
        <taxon>Viruses</taxon>
        <taxon>Varidnaviria</taxon>
        <taxon>Bamfordvirae</taxon>
        <taxon>Nucleocytoviricota</taxon>
        <taxon>Megaviricetes</taxon>
        <taxon>Pimascovirales</taxon>
        <taxon>Iridoviridae</taxon>
        <taxon>Betairidovirinae</taxon>
        <taxon>Iridovirus</taxon>
    </lineage>
</organism>
<gene>
    <name type="ORF">IIV6-268L</name>
</gene>
<protein>
    <recommendedName>
        <fullName>Uncharacterized protein 268L</fullName>
    </recommendedName>
</protein>
<reference key="1">
    <citation type="journal article" date="2001" name="Virology">
        <title>Analysis of the first complete DNA sequence of an invertebrate iridovirus: coding strategy of the genome of Chilo iridescent virus.</title>
        <authorList>
            <person name="Jakob N.J."/>
            <person name="Mueller K."/>
            <person name="Bahr U."/>
            <person name="Darai G."/>
        </authorList>
    </citation>
    <scope>NUCLEOTIDE SEQUENCE [LARGE SCALE GENOMIC DNA]</scope>
</reference>
<reference key="2">
    <citation type="journal article" date="2007" name="Virol. J.">
        <title>Comparative genomic analysis of the family Iridoviridae: re-annotating and defining the core set of iridovirus genes.</title>
        <authorList>
            <person name="Eaton H.E."/>
            <person name="Metcalf J."/>
            <person name="Penny E."/>
            <person name="Tcherepanov V."/>
            <person name="Upton C."/>
            <person name="Brunetti C.R."/>
        </authorList>
    </citation>
    <scope>GENOME REANNOTATION</scope>
</reference>
<feature type="chain" id="PRO_0000377838" description="Uncharacterized protein 268L">
    <location>
        <begin position="1"/>
        <end position="710"/>
    </location>
</feature>
<feature type="region of interest" description="Disordered" evidence="2">
    <location>
        <begin position="1"/>
        <end position="20"/>
    </location>
</feature>
<feature type="coiled-coil region" evidence="1">
    <location>
        <begin position="13"/>
        <end position="42"/>
    </location>
</feature>
<name>VF268_IIV6</name>
<dbReference type="EMBL" id="AF303741">
    <property type="protein sequence ID" value="AAK82129.1"/>
    <property type="molecule type" value="Genomic_DNA"/>
</dbReference>
<dbReference type="RefSeq" id="NP_149731.1">
    <property type="nucleotide sequence ID" value="NC_003038.1"/>
</dbReference>
<dbReference type="SMR" id="Q91FQ5"/>
<dbReference type="KEGG" id="vg:1733310"/>
<dbReference type="OrthoDB" id="5869at10239"/>
<dbReference type="Proteomes" id="UP000001359">
    <property type="component" value="Genome"/>
</dbReference>
<evidence type="ECO:0000255" key="1"/>
<evidence type="ECO:0000256" key="2">
    <source>
        <dbReference type="SAM" id="MobiDB-lite"/>
    </source>
</evidence>
<evidence type="ECO:0000305" key="3"/>
<sequence>MKQRQARLIGTPSQTRRQQELAEKLEKVKEVLEDEKKRQFNEPLFDLTKLRQALDKAIPQPEDVKGFFAQIIKSPSRYEIIFDEAMGVADIEEQEVIEKLRAKEEDEVYDFANNFVRQRRPLPQFFKTFFDKETEKDIFGDIDDISDDENSFTNQDGEAEDNEIITGIRQKDKPEETKEIKLIEQVNMNEGIGRGKILGNKPVFRSVQKSKPFIAEREELKAREGRKRRIQPIPFGIFKEEKLKTCLQFYKLFPWIKDQVLDVFVAPISSNFDDSFFIRSDFYEYISSPVGFAITDDEVEKFYRPKEKYYKLQCYGINKYYNENEPEIIHVNWNNQEYLFKIGILTENRGFLIQEADILLAEEDFIENWLGKSDKRREELLNSVNIPSDAKAVARNEILRSLLNVIPNADLLYTNRILTNIVEKIVDLSLNTSDFFLRVADLIVFINPNINFVSSVFPKRLAKMQYKPEILPLLTQREKLPEIFDDNRIPEATIEYVNRTIHFQIEKVYEDLVNYTVMYNVIPTRKATRPFQMGGKVKPTGRDDKIIIGLPEWKNACVNVNDVINIPDEDLIFYSDIEDQNSDVYCFPINELLDKFSREDIHNQYTGKDFSDTFVRRFLSVYSKPIQAERVVEVERVEEDNIPEGPLIKLIKAELLRLENNLIEPEYFQEEEIKCLECKKAVPAGEGMLSIFKGKKVAFCNMECFENKKW</sequence>
<accession>Q91FQ5</accession>
<organismHost>
    <name type="scientific">Acheta domesticus</name>
    <name type="common">House cricket</name>
    <dbReference type="NCBI Taxonomy" id="6997"/>
</organismHost>
<organismHost>
    <name type="scientific">Chilo suppressalis</name>
    <name type="common">Asiatic rice borer moth</name>
    <dbReference type="NCBI Taxonomy" id="168631"/>
</organismHost>
<organismHost>
    <name type="scientific">Gryllus bimaculatus</name>
    <name type="common">Two-spotted cricket</name>
    <dbReference type="NCBI Taxonomy" id="6999"/>
</organismHost>
<organismHost>
    <name type="scientific">Gryllus campestris</name>
    <dbReference type="NCBI Taxonomy" id="58607"/>
</organismHost>
<organismHost>
    <name type="scientific">Spodoptera frugiperda</name>
    <name type="common">Fall armyworm</name>
    <dbReference type="NCBI Taxonomy" id="7108"/>
</organismHost>
<comment type="similarity">
    <text evidence="3">Belongs to the IIV-6 268L family.</text>
</comment>